<keyword id="KW-0413">Isomerase</keyword>
<keyword id="KW-0460">Magnesium</keyword>
<keyword id="KW-0479">Metal-binding</keyword>
<keyword id="KW-0597">Phosphoprotein</keyword>
<keyword id="KW-1185">Reference proteome</keyword>
<protein>
    <recommendedName>
        <fullName evidence="1">Phosphoglucosamine mutase</fullName>
        <ecNumber evidence="1">5.4.2.10</ecNumber>
    </recommendedName>
</protein>
<accession>Q39UF9</accession>
<evidence type="ECO:0000255" key="1">
    <source>
        <dbReference type="HAMAP-Rule" id="MF_01554"/>
    </source>
</evidence>
<feature type="chain" id="PRO_0000301320" description="Phosphoglucosamine mutase">
    <location>
        <begin position="1"/>
        <end position="451"/>
    </location>
</feature>
<feature type="active site" description="Phosphoserine intermediate" evidence="1">
    <location>
        <position position="101"/>
    </location>
</feature>
<feature type="binding site" description="via phosphate group" evidence="1">
    <location>
        <position position="101"/>
    </location>
    <ligand>
        <name>Mg(2+)</name>
        <dbReference type="ChEBI" id="CHEBI:18420"/>
    </ligand>
</feature>
<feature type="binding site" evidence="1">
    <location>
        <position position="243"/>
    </location>
    <ligand>
        <name>Mg(2+)</name>
        <dbReference type="ChEBI" id="CHEBI:18420"/>
    </ligand>
</feature>
<feature type="binding site" evidence="1">
    <location>
        <position position="245"/>
    </location>
    <ligand>
        <name>Mg(2+)</name>
        <dbReference type="ChEBI" id="CHEBI:18420"/>
    </ligand>
</feature>
<feature type="binding site" evidence="1">
    <location>
        <position position="247"/>
    </location>
    <ligand>
        <name>Mg(2+)</name>
        <dbReference type="ChEBI" id="CHEBI:18420"/>
    </ligand>
</feature>
<feature type="modified residue" description="Phosphoserine" evidence="1">
    <location>
        <position position="101"/>
    </location>
</feature>
<gene>
    <name evidence="1" type="primary">glmM</name>
    <name type="ordered locus">Gmet_1886</name>
</gene>
<reference key="1">
    <citation type="journal article" date="2009" name="BMC Microbiol.">
        <title>The genome sequence of Geobacter metallireducens: features of metabolism, physiology and regulation common and dissimilar to Geobacter sulfurreducens.</title>
        <authorList>
            <person name="Aklujkar M."/>
            <person name="Krushkal J."/>
            <person name="DiBartolo G."/>
            <person name="Lapidus A."/>
            <person name="Land M.L."/>
            <person name="Lovley D.R."/>
        </authorList>
    </citation>
    <scope>NUCLEOTIDE SEQUENCE [LARGE SCALE GENOMIC DNA]</scope>
    <source>
        <strain>ATCC 53774 / DSM 7210 / GS-15</strain>
    </source>
</reference>
<sequence>MKKLFGTDGVRGVANVYPMTTEMAMQIGRAAAYLFKNGNRRHRIVIGKDTRLSGYMLENALVAGICSMGVDVLVVGPLPTPGIANITSSMRADAGVVISASHNAFQDNGIKFFSRDGFKLPDEMELKIEELIFSKKIDSLRPIATEVGKAYRIDDAVGRYVVFLKNTFPKELDLTGMKIVLDCANGAAYKVAPAVLEELGAEVIPYGIKPNGTNINAGFGSLHPEVISEAVKEHRADLGIALDGDADRVIFVDEFGNEVDGDHIMAICATDMLKHKKLRKNTLVATVMSNMGLDIAVKKAGGKVIKTAVGDRYVVEEMLKGGYNLGGEQSGHMIFLDHNTTGDGMLSALQVLAIMRRSGKTLSELAEVMIPLPQVLVNVRVTEKKDIMTIPEVAALIRGVEDKLKDEGRILIRYSGTEPLLRIMLEGQDKYQITGWAKEIADLVEKKIGGK</sequence>
<organism>
    <name type="scientific">Geobacter metallireducens (strain ATCC 53774 / DSM 7210 / GS-15)</name>
    <dbReference type="NCBI Taxonomy" id="269799"/>
    <lineage>
        <taxon>Bacteria</taxon>
        <taxon>Pseudomonadati</taxon>
        <taxon>Thermodesulfobacteriota</taxon>
        <taxon>Desulfuromonadia</taxon>
        <taxon>Geobacterales</taxon>
        <taxon>Geobacteraceae</taxon>
        <taxon>Geobacter</taxon>
    </lineage>
</organism>
<comment type="function">
    <text evidence="1">Catalyzes the conversion of glucosamine-6-phosphate to glucosamine-1-phosphate.</text>
</comment>
<comment type="catalytic activity">
    <reaction evidence="1">
        <text>alpha-D-glucosamine 1-phosphate = D-glucosamine 6-phosphate</text>
        <dbReference type="Rhea" id="RHEA:23424"/>
        <dbReference type="ChEBI" id="CHEBI:58516"/>
        <dbReference type="ChEBI" id="CHEBI:58725"/>
        <dbReference type="EC" id="5.4.2.10"/>
    </reaction>
</comment>
<comment type="cofactor">
    <cofactor evidence="1">
        <name>Mg(2+)</name>
        <dbReference type="ChEBI" id="CHEBI:18420"/>
    </cofactor>
    <text evidence="1">Binds 1 Mg(2+) ion per subunit.</text>
</comment>
<comment type="PTM">
    <text evidence="1">Activated by phosphorylation.</text>
</comment>
<comment type="similarity">
    <text evidence="1">Belongs to the phosphohexose mutase family.</text>
</comment>
<proteinExistence type="inferred from homology"/>
<dbReference type="EC" id="5.4.2.10" evidence="1"/>
<dbReference type="EMBL" id="CP000148">
    <property type="protein sequence ID" value="ABB32115.1"/>
    <property type="molecule type" value="Genomic_DNA"/>
</dbReference>
<dbReference type="RefSeq" id="WP_011365883.1">
    <property type="nucleotide sequence ID" value="NC_007517.1"/>
</dbReference>
<dbReference type="SMR" id="Q39UF9"/>
<dbReference type="STRING" id="269799.Gmet_1886"/>
<dbReference type="KEGG" id="gme:Gmet_1886"/>
<dbReference type="eggNOG" id="COG1109">
    <property type="taxonomic scope" value="Bacteria"/>
</dbReference>
<dbReference type="HOGENOM" id="CLU_016950_7_0_7"/>
<dbReference type="Proteomes" id="UP000007073">
    <property type="component" value="Chromosome"/>
</dbReference>
<dbReference type="GO" id="GO:0005829">
    <property type="term" value="C:cytosol"/>
    <property type="evidence" value="ECO:0007669"/>
    <property type="project" value="TreeGrafter"/>
</dbReference>
<dbReference type="GO" id="GO:0000287">
    <property type="term" value="F:magnesium ion binding"/>
    <property type="evidence" value="ECO:0007669"/>
    <property type="project" value="UniProtKB-UniRule"/>
</dbReference>
<dbReference type="GO" id="GO:0008966">
    <property type="term" value="F:phosphoglucosamine mutase activity"/>
    <property type="evidence" value="ECO:0007669"/>
    <property type="project" value="UniProtKB-UniRule"/>
</dbReference>
<dbReference type="GO" id="GO:0004615">
    <property type="term" value="F:phosphomannomutase activity"/>
    <property type="evidence" value="ECO:0007669"/>
    <property type="project" value="TreeGrafter"/>
</dbReference>
<dbReference type="GO" id="GO:0005975">
    <property type="term" value="P:carbohydrate metabolic process"/>
    <property type="evidence" value="ECO:0007669"/>
    <property type="project" value="InterPro"/>
</dbReference>
<dbReference type="GO" id="GO:0009252">
    <property type="term" value="P:peptidoglycan biosynthetic process"/>
    <property type="evidence" value="ECO:0007669"/>
    <property type="project" value="TreeGrafter"/>
</dbReference>
<dbReference type="GO" id="GO:0006048">
    <property type="term" value="P:UDP-N-acetylglucosamine biosynthetic process"/>
    <property type="evidence" value="ECO:0007669"/>
    <property type="project" value="TreeGrafter"/>
</dbReference>
<dbReference type="CDD" id="cd05802">
    <property type="entry name" value="GlmM"/>
    <property type="match status" value="1"/>
</dbReference>
<dbReference type="FunFam" id="3.30.310.50:FF:000001">
    <property type="entry name" value="Phosphoglucosamine mutase"/>
    <property type="match status" value="1"/>
</dbReference>
<dbReference type="FunFam" id="3.40.120.10:FF:000001">
    <property type="entry name" value="Phosphoglucosamine mutase"/>
    <property type="match status" value="1"/>
</dbReference>
<dbReference type="FunFam" id="3.40.120.10:FF:000002">
    <property type="entry name" value="Phosphoglucosamine mutase"/>
    <property type="match status" value="1"/>
</dbReference>
<dbReference type="Gene3D" id="3.40.120.10">
    <property type="entry name" value="Alpha-D-Glucose-1,6-Bisphosphate, subunit A, domain 3"/>
    <property type="match status" value="3"/>
</dbReference>
<dbReference type="Gene3D" id="3.30.310.50">
    <property type="entry name" value="Alpha-D-phosphohexomutase, C-terminal domain"/>
    <property type="match status" value="1"/>
</dbReference>
<dbReference type="HAMAP" id="MF_01554_B">
    <property type="entry name" value="GlmM_B"/>
    <property type="match status" value="1"/>
</dbReference>
<dbReference type="InterPro" id="IPR005844">
    <property type="entry name" value="A-D-PHexomutase_a/b/a-I"/>
</dbReference>
<dbReference type="InterPro" id="IPR016055">
    <property type="entry name" value="A-D-PHexomutase_a/b/a-I/II/III"/>
</dbReference>
<dbReference type="InterPro" id="IPR005845">
    <property type="entry name" value="A-D-PHexomutase_a/b/a-II"/>
</dbReference>
<dbReference type="InterPro" id="IPR005846">
    <property type="entry name" value="A-D-PHexomutase_a/b/a-III"/>
</dbReference>
<dbReference type="InterPro" id="IPR005843">
    <property type="entry name" value="A-D-PHexomutase_C"/>
</dbReference>
<dbReference type="InterPro" id="IPR036900">
    <property type="entry name" value="A-D-PHexomutase_C_sf"/>
</dbReference>
<dbReference type="InterPro" id="IPR005841">
    <property type="entry name" value="Alpha-D-phosphohexomutase_SF"/>
</dbReference>
<dbReference type="InterPro" id="IPR006352">
    <property type="entry name" value="GlmM_bact"/>
</dbReference>
<dbReference type="InterPro" id="IPR050060">
    <property type="entry name" value="Phosphoglucosamine_mutase"/>
</dbReference>
<dbReference type="NCBIfam" id="TIGR01455">
    <property type="entry name" value="glmM"/>
    <property type="match status" value="1"/>
</dbReference>
<dbReference type="NCBIfam" id="NF008139">
    <property type="entry name" value="PRK10887.1"/>
    <property type="match status" value="1"/>
</dbReference>
<dbReference type="PANTHER" id="PTHR42946:SF1">
    <property type="entry name" value="PHOSPHOGLUCOMUTASE (ALPHA-D-GLUCOSE-1,6-BISPHOSPHATE-DEPENDENT)"/>
    <property type="match status" value="1"/>
</dbReference>
<dbReference type="PANTHER" id="PTHR42946">
    <property type="entry name" value="PHOSPHOHEXOSE MUTASE"/>
    <property type="match status" value="1"/>
</dbReference>
<dbReference type="Pfam" id="PF02878">
    <property type="entry name" value="PGM_PMM_I"/>
    <property type="match status" value="1"/>
</dbReference>
<dbReference type="Pfam" id="PF02879">
    <property type="entry name" value="PGM_PMM_II"/>
    <property type="match status" value="1"/>
</dbReference>
<dbReference type="Pfam" id="PF02880">
    <property type="entry name" value="PGM_PMM_III"/>
    <property type="match status" value="1"/>
</dbReference>
<dbReference type="Pfam" id="PF00408">
    <property type="entry name" value="PGM_PMM_IV"/>
    <property type="match status" value="1"/>
</dbReference>
<dbReference type="PRINTS" id="PR00509">
    <property type="entry name" value="PGMPMM"/>
</dbReference>
<dbReference type="SUPFAM" id="SSF55957">
    <property type="entry name" value="Phosphoglucomutase, C-terminal domain"/>
    <property type="match status" value="1"/>
</dbReference>
<dbReference type="SUPFAM" id="SSF53738">
    <property type="entry name" value="Phosphoglucomutase, first 3 domains"/>
    <property type="match status" value="3"/>
</dbReference>
<name>GLMM_GEOMG</name>